<organism>
    <name type="scientific">Bacillus subtilis (strain 168)</name>
    <dbReference type="NCBI Taxonomy" id="224308"/>
    <lineage>
        <taxon>Bacteria</taxon>
        <taxon>Bacillati</taxon>
        <taxon>Bacillota</taxon>
        <taxon>Bacilli</taxon>
        <taxon>Bacillales</taxon>
        <taxon>Bacillaceae</taxon>
        <taxon>Bacillus</taxon>
    </lineage>
</organism>
<proteinExistence type="predicted"/>
<name>YLBE_BACSU</name>
<feature type="chain" id="PRO_0000360184" description="Uncharacterized protein YlbE">
    <location>
        <begin position="1"/>
        <end position="79"/>
    </location>
</feature>
<reference key="1">
    <citation type="submission" date="1997-08" db="EMBL/GenBank/DDBJ databases">
        <title>Bacillus subtilis chromosomal region downstream nprE.</title>
        <authorList>
            <person name="Bertero M."/>
            <person name="Presecan E."/>
            <person name="Glaser P."/>
            <person name="Richou A."/>
            <person name="Danchin A."/>
        </authorList>
    </citation>
    <scope>NUCLEOTIDE SEQUENCE [GENOMIC DNA]</scope>
    <source>
        <strain>168</strain>
    </source>
</reference>
<reference key="2">
    <citation type="journal article" date="1997" name="Nature">
        <title>The complete genome sequence of the Gram-positive bacterium Bacillus subtilis.</title>
        <authorList>
            <person name="Kunst F."/>
            <person name="Ogasawara N."/>
            <person name="Moszer I."/>
            <person name="Albertini A.M."/>
            <person name="Alloni G."/>
            <person name="Azevedo V."/>
            <person name="Bertero M.G."/>
            <person name="Bessieres P."/>
            <person name="Bolotin A."/>
            <person name="Borchert S."/>
            <person name="Borriss R."/>
            <person name="Boursier L."/>
            <person name="Brans A."/>
            <person name="Braun M."/>
            <person name="Brignell S.C."/>
            <person name="Bron S."/>
            <person name="Brouillet S."/>
            <person name="Bruschi C.V."/>
            <person name="Caldwell B."/>
            <person name="Capuano V."/>
            <person name="Carter N.M."/>
            <person name="Choi S.-K."/>
            <person name="Codani J.-J."/>
            <person name="Connerton I.F."/>
            <person name="Cummings N.J."/>
            <person name="Daniel R.A."/>
            <person name="Denizot F."/>
            <person name="Devine K.M."/>
            <person name="Duesterhoeft A."/>
            <person name="Ehrlich S.D."/>
            <person name="Emmerson P.T."/>
            <person name="Entian K.-D."/>
            <person name="Errington J."/>
            <person name="Fabret C."/>
            <person name="Ferrari E."/>
            <person name="Foulger D."/>
            <person name="Fritz C."/>
            <person name="Fujita M."/>
            <person name="Fujita Y."/>
            <person name="Fuma S."/>
            <person name="Galizzi A."/>
            <person name="Galleron N."/>
            <person name="Ghim S.-Y."/>
            <person name="Glaser P."/>
            <person name="Goffeau A."/>
            <person name="Golightly E.J."/>
            <person name="Grandi G."/>
            <person name="Guiseppi G."/>
            <person name="Guy B.J."/>
            <person name="Haga K."/>
            <person name="Haiech J."/>
            <person name="Harwood C.R."/>
            <person name="Henaut A."/>
            <person name="Hilbert H."/>
            <person name="Holsappel S."/>
            <person name="Hosono S."/>
            <person name="Hullo M.-F."/>
            <person name="Itaya M."/>
            <person name="Jones L.-M."/>
            <person name="Joris B."/>
            <person name="Karamata D."/>
            <person name="Kasahara Y."/>
            <person name="Klaerr-Blanchard M."/>
            <person name="Klein C."/>
            <person name="Kobayashi Y."/>
            <person name="Koetter P."/>
            <person name="Koningstein G."/>
            <person name="Krogh S."/>
            <person name="Kumano M."/>
            <person name="Kurita K."/>
            <person name="Lapidus A."/>
            <person name="Lardinois S."/>
            <person name="Lauber J."/>
            <person name="Lazarevic V."/>
            <person name="Lee S.-M."/>
            <person name="Levine A."/>
            <person name="Liu H."/>
            <person name="Masuda S."/>
            <person name="Mauel C."/>
            <person name="Medigue C."/>
            <person name="Medina N."/>
            <person name="Mellado R.P."/>
            <person name="Mizuno M."/>
            <person name="Moestl D."/>
            <person name="Nakai S."/>
            <person name="Noback M."/>
            <person name="Noone D."/>
            <person name="O'Reilly M."/>
            <person name="Ogawa K."/>
            <person name="Ogiwara A."/>
            <person name="Oudega B."/>
            <person name="Park S.-H."/>
            <person name="Parro V."/>
            <person name="Pohl T.M."/>
            <person name="Portetelle D."/>
            <person name="Porwollik S."/>
            <person name="Prescott A.M."/>
            <person name="Presecan E."/>
            <person name="Pujic P."/>
            <person name="Purnelle B."/>
            <person name="Rapoport G."/>
            <person name="Rey M."/>
            <person name="Reynolds S."/>
            <person name="Rieger M."/>
            <person name="Rivolta C."/>
            <person name="Rocha E."/>
            <person name="Roche B."/>
            <person name="Rose M."/>
            <person name="Sadaie Y."/>
            <person name="Sato T."/>
            <person name="Scanlan E."/>
            <person name="Schleich S."/>
            <person name="Schroeter R."/>
            <person name="Scoffone F."/>
            <person name="Sekiguchi J."/>
            <person name="Sekowska A."/>
            <person name="Seror S.J."/>
            <person name="Serror P."/>
            <person name="Shin B.-S."/>
            <person name="Soldo B."/>
            <person name="Sorokin A."/>
            <person name="Tacconi E."/>
            <person name="Takagi T."/>
            <person name="Takahashi H."/>
            <person name="Takemaru K."/>
            <person name="Takeuchi M."/>
            <person name="Tamakoshi A."/>
            <person name="Tanaka T."/>
            <person name="Terpstra P."/>
            <person name="Tognoni A."/>
            <person name="Tosato V."/>
            <person name="Uchiyama S."/>
            <person name="Vandenbol M."/>
            <person name="Vannier F."/>
            <person name="Vassarotti A."/>
            <person name="Viari A."/>
            <person name="Wambutt R."/>
            <person name="Wedler E."/>
            <person name="Wedler H."/>
            <person name="Weitzenegger T."/>
            <person name="Winters P."/>
            <person name="Wipat A."/>
            <person name="Yamamoto H."/>
            <person name="Yamane K."/>
            <person name="Yasumoto K."/>
            <person name="Yata K."/>
            <person name="Yoshida K."/>
            <person name="Yoshikawa H.-F."/>
            <person name="Zumstein E."/>
            <person name="Yoshikawa H."/>
            <person name="Danchin A."/>
        </authorList>
    </citation>
    <scope>NUCLEOTIDE SEQUENCE [LARGE SCALE GENOMIC DNA]</scope>
    <source>
        <strain>168</strain>
    </source>
</reference>
<keyword id="KW-1185">Reference proteome</keyword>
<accession>O34958</accession>
<accession>Q797T4</accession>
<protein>
    <recommendedName>
        <fullName>Uncharacterized protein YlbE</fullName>
    </recommendedName>
</protein>
<gene>
    <name type="primary">ylbE</name>
    <name type="ordered locus">BSU14980</name>
</gene>
<dbReference type="EMBL" id="Z98682">
    <property type="protein sequence ID" value="CAB11351.1"/>
    <property type="molecule type" value="Genomic_DNA"/>
</dbReference>
<dbReference type="EMBL" id="AL009126">
    <property type="protein sequence ID" value="CAB13371.1"/>
    <property type="molecule type" value="Genomic_DNA"/>
</dbReference>
<dbReference type="PIR" id="B69874">
    <property type="entry name" value="B69874"/>
</dbReference>
<dbReference type="RefSeq" id="NP_389381.1">
    <property type="nucleotide sequence ID" value="NC_000964.3"/>
</dbReference>
<dbReference type="RefSeq" id="WP_003232231.1">
    <property type="nucleotide sequence ID" value="NZ_OZ025638.1"/>
</dbReference>
<dbReference type="SMR" id="O34958"/>
<dbReference type="FunCoup" id="O34958">
    <property type="interactions" value="82"/>
</dbReference>
<dbReference type="STRING" id="224308.BSU14980"/>
<dbReference type="PaxDb" id="224308-BSU14980"/>
<dbReference type="EnsemblBacteria" id="CAB13371">
    <property type="protein sequence ID" value="CAB13371"/>
    <property type="gene ID" value="BSU_14980"/>
</dbReference>
<dbReference type="GeneID" id="938216"/>
<dbReference type="KEGG" id="bsu:BSU14980"/>
<dbReference type="PATRIC" id="fig|224308.179.peg.1633"/>
<dbReference type="eggNOG" id="ENOG50336YB">
    <property type="taxonomic scope" value="Bacteria"/>
</dbReference>
<dbReference type="InParanoid" id="O34958"/>
<dbReference type="OrthoDB" id="1646085at2"/>
<dbReference type="BioCyc" id="BSUB:BSU14980-MONOMER"/>
<dbReference type="Proteomes" id="UP000001570">
    <property type="component" value="Chromosome"/>
</dbReference>
<dbReference type="InterPro" id="IPR025613">
    <property type="entry name" value="YlbE"/>
</dbReference>
<dbReference type="Pfam" id="PF14003">
    <property type="entry name" value="YlbE"/>
    <property type="match status" value="1"/>
</dbReference>
<sequence length="79" mass="9867">MRKEVQEYILANEERKRFIREQPIWYRRLSRKPDDLSSFQLEMMNFYEKTIPHRVNQFTNGIQMAQMMMQMFQAMRTKD</sequence>